<organism>
    <name type="scientific">Saccharomyces cerevisiae (strain ATCC 204508 / S288c)</name>
    <name type="common">Baker's yeast</name>
    <dbReference type="NCBI Taxonomy" id="559292"/>
    <lineage>
        <taxon>Eukaryota</taxon>
        <taxon>Fungi</taxon>
        <taxon>Dikarya</taxon>
        <taxon>Ascomycota</taxon>
        <taxon>Saccharomycotina</taxon>
        <taxon>Saccharomycetes</taxon>
        <taxon>Saccharomycetales</taxon>
        <taxon>Saccharomycetaceae</taxon>
        <taxon>Saccharomyces</taxon>
    </lineage>
</organism>
<comment type="function">
    <text evidence="1 3">Substrate recognition component of a SCF (SKP1-CUL1-F-box protein) E3 ubiquitin-protein ligase complex which mediates the ubiquitination and subsequent proteasomal degradation of target proteins. Probably recognizes and binds to phosphorylated target proteins (By similarity).</text>
</comment>
<comment type="pathway">
    <text>Protein modification; protein ubiquitination.</text>
</comment>
<comment type="subunit">
    <text evidence="2 3">Interacts with SKP1. Component of the probable SCF(HRT3) complex containing CDC53, SKP1, RBX1 and HRT3.</text>
</comment>
<comment type="interaction">
    <interactant intactId="EBI-30029">
        <id>Q12347</id>
    </interactant>
    <interactant intactId="EBI-4090">
        <id>P52286</id>
        <label>SKP1</label>
    </interactant>
    <organismsDiffer>false</organismsDiffer>
    <experiments>5</experiments>
</comment>
<accession>Q12347</accession>
<accession>D6VY97</accession>
<proteinExistence type="evidence at protein level"/>
<gene>
    <name type="primary">HRT3</name>
    <name type="ordered locus">YLR097C</name>
</gene>
<evidence type="ECO:0000250" key="1"/>
<evidence type="ECO:0000269" key="2">
    <source>
    </source>
</evidence>
<evidence type="ECO:0000269" key="3">
    <source>
    </source>
</evidence>
<reference key="1">
    <citation type="journal article" date="1997" name="Nature">
        <title>The nucleotide sequence of Saccharomyces cerevisiae chromosome XII.</title>
        <authorList>
            <person name="Johnston M."/>
            <person name="Hillier L.W."/>
            <person name="Riles L."/>
            <person name="Albermann K."/>
            <person name="Andre B."/>
            <person name="Ansorge W."/>
            <person name="Benes V."/>
            <person name="Brueckner M."/>
            <person name="Delius H."/>
            <person name="Dubois E."/>
            <person name="Duesterhoeft A."/>
            <person name="Entian K.-D."/>
            <person name="Floeth M."/>
            <person name="Goffeau A."/>
            <person name="Hebling U."/>
            <person name="Heumann K."/>
            <person name="Heuss-Neitzel D."/>
            <person name="Hilbert H."/>
            <person name="Hilger F."/>
            <person name="Kleine K."/>
            <person name="Koetter P."/>
            <person name="Louis E.J."/>
            <person name="Messenguy F."/>
            <person name="Mewes H.-W."/>
            <person name="Miosga T."/>
            <person name="Moestl D."/>
            <person name="Mueller-Auer S."/>
            <person name="Nentwich U."/>
            <person name="Obermaier B."/>
            <person name="Piravandi E."/>
            <person name="Pohl T.M."/>
            <person name="Portetelle D."/>
            <person name="Purnelle B."/>
            <person name="Rechmann S."/>
            <person name="Rieger M."/>
            <person name="Rinke M."/>
            <person name="Rose M."/>
            <person name="Scharfe M."/>
            <person name="Scherens B."/>
            <person name="Scholler P."/>
            <person name="Schwager C."/>
            <person name="Schwarz S."/>
            <person name="Underwood A.P."/>
            <person name="Urrestarazu L.A."/>
            <person name="Vandenbol M."/>
            <person name="Verhasselt P."/>
            <person name="Vierendeels F."/>
            <person name="Voet M."/>
            <person name="Volckaert G."/>
            <person name="Voss H."/>
            <person name="Wambutt R."/>
            <person name="Wedler E."/>
            <person name="Wedler H."/>
            <person name="Zimmermann F.K."/>
            <person name="Zollner A."/>
            <person name="Hani J."/>
            <person name="Hoheisel J.D."/>
        </authorList>
    </citation>
    <scope>NUCLEOTIDE SEQUENCE [LARGE SCALE GENOMIC DNA]</scope>
    <source>
        <strain>ATCC 204508 / S288c</strain>
    </source>
</reference>
<reference key="2">
    <citation type="journal article" date="2014" name="G3 (Bethesda)">
        <title>The reference genome sequence of Saccharomyces cerevisiae: Then and now.</title>
        <authorList>
            <person name="Engel S.R."/>
            <person name="Dietrich F.S."/>
            <person name="Fisk D.G."/>
            <person name="Binkley G."/>
            <person name="Balakrishnan R."/>
            <person name="Costanzo M.C."/>
            <person name="Dwight S.S."/>
            <person name="Hitz B.C."/>
            <person name="Karra K."/>
            <person name="Nash R.S."/>
            <person name="Weng S."/>
            <person name="Wong E.D."/>
            <person name="Lloyd P."/>
            <person name="Skrzypek M.S."/>
            <person name="Miyasato S.R."/>
            <person name="Simison M."/>
            <person name="Cherry J.M."/>
        </authorList>
    </citation>
    <scope>GENOME REANNOTATION</scope>
    <source>
        <strain>ATCC 204508 / S288c</strain>
    </source>
</reference>
<reference key="3">
    <citation type="journal article" date="2001" name="Nat. Cell Biol.">
        <title>Skp1 forms multiple protein complexes, including RAVE, a regulator of V-ATPase assembly.</title>
        <authorList>
            <person name="Seol J.H."/>
            <person name="Shevchenko A."/>
            <person name="Shevchenko A."/>
            <person name="Deshaies R.J."/>
        </authorList>
    </citation>
    <scope>INTERACTION WITH SKP1</scope>
    <scope>IDENTIFICATION BY MASS SPECTROMETRY</scope>
</reference>
<reference key="4">
    <citation type="journal article" date="2004" name="Proteins">
        <title>Functional interaction of 13 yeast SCF complexes with a set of yeast E2 enzymes in vitro.</title>
        <authorList>
            <person name="Kus B.M."/>
            <person name="Caldon C.E."/>
            <person name="Andorn-Broza R."/>
            <person name="Edwards A.M."/>
        </authorList>
    </citation>
    <scope>INTERACTION WITH SKP1</scope>
    <scope>RECONSTITUTION OF THE SCF(HRT3) COMPLEX</scope>
    <scope>FUNCTION</scope>
</reference>
<reference key="5">
    <citation type="journal article" date="2012" name="Proc. Natl. Acad. Sci. U.S.A.">
        <title>N-terminal acetylome analyses and functional insights of the N-terminal acetyltransferase NatB.</title>
        <authorList>
            <person name="Van Damme P."/>
            <person name="Lasa M."/>
            <person name="Polevoda B."/>
            <person name="Gazquez C."/>
            <person name="Elosegui-Artola A."/>
            <person name="Kim D.S."/>
            <person name="De Juan-Pardo E."/>
            <person name="Demeyer K."/>
            <person name="Hole K."/>
            <person name="Larrea E."/>
            <person name="Timmerman E."/>
            <person name="Prieto J."/>
            <person name="Arnesen T."/>
            <person name="Sherman F."/>
            <person name="Gevaert K."/>
            <person name="Aldabe R."/>
        </authorList>
    </citation>
    <scope>IDENTIFICATION BY MASS SPECTROMETRY [LARGE SCALE ANALYSIS]</scope>
</reference>
<dbReference type="EMBL" id="Z73269">
    <property type="protein sequence ID" value="CAA97660.1"/>
    <property type="molecule type" value="Genomic_DNA"/>
</dbReference>
<dbReference type="EMBL" id="U53876">
    <property type="protein sequence ID" value="AAB67541.1"/>
    <property type="molecule type" value="Genomic_DNA"/>
</dbReference>
<dbReference type="EMBL" id="BK006945">
    <property type="protein sequence ID" value="DAA09413.1"/>
    <property type="molecule type" value="Genomic_DNA"/>
</dbReference>
<dbReference type="PIR" id="S64931">
    <property type="entry name" value="S64931"/>
</dbReference>
<dbReference type="RefSeq" id="NP_013198.1">
    <property type="nucleotide sequence ID" value="NM_001181984.1"/>
</dbReference>
<dbReference type="SMR" id="Q12347"/>
<dbReference type="BioGRID" id="31370">
    <property type="interactions" value="71"/>
</dbReference>
<dbReference type="ComplexPortal" id="CPX-3255">
    <property type="entry name" value="SCF-Hrt3 ubiquitin ligase complex"/>
</dbReference>
<dbReference type="DIP" id="DIP-1629N"/>
<dbReference type="FunCoup" id="Q12347">
    <property type="interactions" value="172"/>
</dbReference>
<dbReference type="IntAct" id="Q12347">
    <property type="interactions" value="21"/>
</dbReference>
<dbReference type="MINT" id="Q12347"/>
<dbReference type="STRING" id="4932.YLR097C"/>
<dbReference type="iPTMnet" id="Q12347"/>
<dbReference type="PaxDb" id="4932-YLR097C"/>
<dbReference type="PeptideAtlas" id="Q12347"/>
<dbReference type="PRIDE" id="Q12347"/>
<dbReference type="EnsemblFungi" id="YLR097C_mRNA">
    <property type="protein sequence ID" value="YLR097C"/>
    <property type="gene ID" value="YLR097C"/>
</dbReference>
<dbReference type="GeneID" id="850786"/>
<dbReference type="KEGG" id="sce:YLR097C"/>
<dbReference type="AGR" id="SGD:S000004087"/>
<dbReference type="SGD" id="S000004087">
    <property type="gene designation" value="HRT3"/>
</dbReference>
<dbReference type="VEuPathDB" id="FungiDB:YLR097C"/>
<dbReference type="eggNOG" id="KOG2997">
    <property type="taxonomic scope" value="Eukaryota"/>
</dbReference>
<dbReference type="GeneTree" id="ENSGT00390000014256"/>
<dbReference type="HOGENOM" id="CLU_017706_1_0_1"/>
<dbReference type="InParanoid" id="Q12347"/>
<dbReference type="OMA" id="RWNRLDF"/>
<dbReference type="OrthoDB" id="2117972at2759"/>
<dbReference type="BioCyc" id="YEAST:G3O-32247-MONOMER"/>
<dbReference type="Reactome" id="R-SCE-983168">
    <property type="pathway name" value="Antigen processing: Ubiquitination &amp; Proteasome degradation"/>
</dbReference>
<dbReference type="UniPathway" id="UPA00143"/>
<dbReference type="BioGRID-ORCS" id="850786">
    <property type="hits" value="0 hits in 10 CRISPR screens"/>
</dbReference>
<dbReference type="PRO" id="PR:Q12347"/>
<dbReference type="Proteomes" id="UP000002311">
    <property type="component" value="Chromosome XII"/>
</dbReference>
<dbReference type="RNAct" id="Q12347">
    <property type="molecule type" value="protein"/>
</dbReference>
<dbReference type="GO" id="GO:0005737">
    <property type="term" value="C:cytoplasm"/>
    <property type="evidence" value="ECO:0000318"/>
    <property type="project" value="GO_Central"/>
</dbReference>
<dbReference type="GO" id="GO:0019005">
    <property type="term" value="C:SCF ubiquitin ligase complex"/>
    <property type="evidence" value="ECO:0000314"/>
    <property type="project" value="SGD"/>
</dbReference>
<dbReference type="GO" id="GO:0030674">
    <property type="term" value="F:protein-macromolecule adaptor activity"/>
    <property type="evidence" value="ECO:0000247"/>
    <property type="project" value="SGD"/>
</dbReference>
<dbReference type="GO" id="GO:0071406">
    <property type="term" value="P:cellular response to methylmercury"/>
    <property type="evidence" value="ECO:0000315"/>
    <property type="project" value="SGD"/>
</dbReference>
<dbReference type="GO" id="GO:0016567">
    <property type="term" value="P:protein ubiquitination"/>
    <property type="evidence" value="ECO:0007669"/>
    <property type="project" value="UniProtKB-UniPathway"/>
</dbReference>
<dbReference type="GO" id="GO:0031146">
    <property type="term" value="P:SCF-dependent proteasomal ubiquitin-dependent protein catabolic process"/>
    <property type="evidence" value="ECO:0000316"/>
    <property type="project" value="SGD"/>
</dbReference>
<dbReference type="GO" id="GO:0006511">
    <property type="term" value="P:ubiquitin-dependent protein catabolic process"/>
    <property type="evidence" value="ECO:0000314"/>
    <property type="project" value="ComplexPortal"/>
</dbReference>
<dbReference type="InterPro" id="IPR036047">
    <property type="entry name" value="F-box-like_dom_sf"/>
</dbReference>
<dbReference type="InterPro" id="IPR045464">
    <property type="entry name" value="Hrt3/FBXO9_C"/>
</dbReference>
<dbReference type="PANTHER" id="PTHR12874:SF9">
    <property type="entry name" value="F-BOX ONLY PROTEIN 48"/>
    <property type="match status" value="1"/>
</dbReference>
<dbReference type="PANTHER" id="PTHR12874">
    <property type="entry name" value="F-BOX ONLY PROTEIN 48-RELATED"/>
    <property type="match status" value="1"/>
</dbReference>
<dbReference type="Pfam" id="PF19270">
    <property type="entry name" value="FBO_C"/>
    <property type="match status" value="1"/>
</dbReference>
<dbReference type="SUPFAM" id="SSF81383">
    <property type="entry name" value="F-box domain"/>
    <property type="match status" value="1"/>
</dbReference>
<name>HRT3_YEAST</name>
<sequence>MIVDYEKDPRAKEAIAIWEKGVLKEKDGSMSDAINFYRSALKIHDNVESLYRKKILDEWMLHKKLSGLSMTTDAPDEQNETGKDDLSVEENAELQPCWILEILPDDILLRIIKKVILMSGESWVNLSMTCSTFSKLCFHDSVPFKTFAKYIYSKQIYDKMAMDLNGITDINTFEKEIWRGDDYRMLRERPYIKFEGVYISVVNYVRYGSNAESSLSLLKPVHMITYYRYFRFYENGQCLRLLSTDEPSAVVKHFSKENKPRHSHMCYWSLGFDYDFGHLKITRSDEKYTFIEEFQIKNQGNKRYQRLKWLSSIVVDKEGNASNCSLRNEKSFFFSRVKSFKDPG</sequence>
<keyword id="KW-1185">Reference proteome</keyword>
<keyword id="KW-0802">TPR repeat</keyword>
<keyword id="KW-0833">Ubl conjugation pathway</keyword>
<feature type="chain" id="PRO_0000245842" description="F-box protein HRT3">
    <location>
        <begin position="1"/>
        <end position="344"/>
    </location>
</feature>
<feature type="repeat" description="TPR">
    <location>
        <begin position="14"/>
        <end position="47"/>
    </location>
</feature>
<feature type="domain" description="F-box">
    <location>
        <begin position="98"/>
        <end position="148"/>
    </location>
</feature>
<protein>
    <recommendedName>
        <fullName>F-box protein HRT3</fullName>
    </recommendedName>
    <alternativeName>
        <fullName>High level expression reduces Ty3 transposition protein 3</fullName>
    </alternativeName>
</protein>